<protein>
    <recommendedName>
        <fullName evidence="1">Recombination protein RecR</fullName>
    </recommendedName>
</protein>
<organism>
    <name type="scientific">Staphylococcus epidermidis (strain ATCC 35984 / DSM 28319 / BCRC 17069 / CCUG 31568 / BM 3577 / RP62A)</name>
    <dbReference type="NCBI Taxonomy" id="176279"/>
    <lineage>
        <taxon>Bacteria</taxon>
        <taxon>Bacillati</taxon>
        <taxon>Bacillota</taxon>
        <taxon>Bacilli</taxon>
        <taxon>Bacillales</taxon>
        <taxon>Staphylococcaceae</taxon>
        <taxon>Staphylococcus</taxon>
    </lineage>
</organism>
<comment type="function">
    <text evidence="1">May play a role in DNA repair. It seems to be involved in an RecBC-independent recombinational process of DNA repair. It may act with RecF and RecO.</text>
</comment>
<comment type="similarity">
    <text evidence="1">Belongs to the RecR family.</text>
</comment>
<keyword id="KW-0227">DNA damage</keyword>
<keyword id="KW-0233">DNA recombination</keyword>
<keyword id="KW-0234">DNA repair</keyword>
<keyword id="KW-0479">Metal-binding</keyword>
<keyword id="KW-1185">Reference proteome</keyword>
<keyword id="KW-0862">Zinc</keyword>
<keyword id="KW-0863">Zinc-finger</keyword>
<reference key="1">
    <citation type="journal article" date="2005" name="J. Bacteriol.">
        <title>Insights on evolution of virulence and resistance from the complete genome analysis of an early methicillin-resistant Staphylococcus aureus strain and a biofilm-producing methicillin-resistant Staphylococcus epidermidis strain.</title>
        <authorList>
            <person name="Gill S.R."/>
            <person name="Fouts D.E."/>
            <person name="Archer G.L."/>
            <person name="Mongodin E.F."/>
            <person name="DeBoy R.T."/>
            <person name="Ravel J."/>
            <person name="Paulsen I.T."/>
            <person name="Kolonay J.F."/>
            <person name="Brinkac L.M."/>
            <person name="Beanan M.J."/>
            <person name="Dodson R.J."/>
            <person name="Daugherty S.C."/>
            <person name="Madupu R."/>
            <person name="Angiuoli S.V."/>
            <person name="Durkin A.S."/>
            <person name="Haft D.H."/>
            <person name="Vamathevan J.J."/>
            <person name="Khouri H."/>
            <person name="Utterback T.R."/>
            <person name="Lee C."/>
            <person name="Dimitrov G."/>
            <person name="Jiang L."/>
            <person name="Qin H."/>
            <person name="Weidman J."/>
            <person name="Tran K."/>
            <person name="Kang K.H."/>
            <person name="Hance I.R."/>
            <person name="Nelson K.E."/>
            <person name="Fraser C.M."/>
        </authorList>
    </citation>
    <scope>NUCLEOTIDE SEQUENCE [LARGE SCALE GENOMIC DNA]</scope>
    <source>
        <strain>ATCC 35984 / DSM 28319 / BCRC 17069 / CCUG 31568 / BM 3577 / RP62A</strain>
    </source>
</reference>
<proteinExistence type="inferred from homology"/>
<sequence>MHYPEPISKLIDSFMKLPGIGPKTAQRLAFHTLDMKEDDVVKFAKALVDVKRELTYCSVCGHITENDPCYICEDKQRDRSVICVVEDDKDVIAMEKMREYKGLYHVLHGSISPMDGIGPEDINIPALVERLKNDEVKELILAMNPNLEGESTAMYISRLVKPIGIKVTRLAQGLSVGGDLEYADEVTLSKAIAGRTEM</sequence>
<accession>Q5HRS7</accession>
<name>RECR_STAEQ</name>
<dbReference type="EMBL" id="CP000029">
    <property type="protein sequence ID" value="AAW53558.1"/>
    <property type="molecule type" value="Genomic_DNA"/>
</dbReference>
<dbReference type="RefSeq" id="WP_001829377.1">
    <property type="nucleotide sequence ID" value="NC_002976.3"/>
</dbReference>
<dbReference type="SMR" id="Q5HRS7"/>
<dbReference type="STRING" id="176279.SERP0116"/>
<dbReference type="GeneID" id="50019613"/>
<dbReference type="KEGG" id="ser:SERP0116"/>
<dbReference type="eggNOG" id="COG0353">
    <property type="taxonomic scope" value="Bacteria"/>
</dbReference>
<dbReference type="HOGENOM" id="CLU_060739_1_0_9"/>
<dbReference type="Proteomes" id="UP000000531">
    <property type="component" value="Chromosome"/>
</dbReference>
<dbReference type="GO" id="GO:0003677">
    <property type="term" value="F:DNA binding"/>
    <property type="evidence" value="ECO:0007669"/>
    <property type="project" value="UniProtKB-UniRule"/>
</dbReference>
<dbReference type="GO" id="GO:0008270">
    <property type="term" value="F:zinc ion binding"/>
    <property type="evidence" value="ECO:0007669"/>
    <property type="project" value="UniProtKB-KW"/>
</dbReference>
<dbReference type="GO" id="GO:0006310">
    <property type="term" value="P:DNA recombination"/>
    <property type="evidence" value="ECO:0007669"/>
    <property type="project" value="UniProtKB-UniRule"/>
</dbReference>
<dbReference type="GO" id="GO:0006281">
    <property type="term" value="P:DNA repair"/>
    <property type="evidence" value="ECO:0007669"/>
    <property type="project" value="UniProtKB-UniRule"/>
</dbReference>
<dbReference type="CDD" id="cd01025">
    <property type="entry name" value="TOPRIM_recR"/>
    <property type="match status" value="1"/>
</dbReference>
<dbReference type="Gene3D" id="3.30.60.80">
    <property type="match status" value="1"/>
</dbReference>
<dbReference type="Gene3D" id="3.40.1360.10">
    <property type="match status" value="1"/>
</dbReference>
<dbReference type="Gene3D" id="6.10.250.240">
    <property type="match status" value="1"/>
</dbReference>
<dbReference type="Gene3D" id="1.10.8.420">
    <property type="entry name" value="RecR Domain 1"/>
    <property type="match status" value="1"/>
</dbReference>
<dbReference type="HAMAP" id="MF_00017">
    <property type="entry name" value="RecR"/>
    <property type="match status" value="1"/>
</dbReference>
<dbReference type="InterPro" id="IPR000093">
    <property type="entry name" value="DNA_Rcmb_RecR"/>
</dbReference>
<dbReference type="InterPro" id="IPR003583">
    <property type="entry name" value="Hlx-hairpin-Hlx_DNA-bd_motif"/>
</dbReference>
<dbReference type="InterPro" id="IPR023627">
    <property type="entry name" value="Rcmb_RecR"/>
</dbReference>
<dbReference type="InterPro" id="IPR015967">
    <property type="entry name" value="Rcmb_RecR_Znf"/>
</dbReference>
<dbReference type="InterPro" id="IPR006171">
    <property type="entry name" value="TOPRIM_dom"/>
</dbReference>
<dbReference type="InterPro" id="IPR034137">
    <property type="entry name" value="TOPRIM_RecR"/>
</dbReference>
<dbReference type="NCBIfam" id="TIGR00615">
    <property type="entry name" value="recR"/>
    <property type="match status" value="1"/>
</dbReference>
<dbReference type="PANTHER" id="PTHR30446">
    <property type="entry name" value="RECOMBINATION PROTEIN RECR"/>
    <property type="match status" value="1"/>
</dbReference>
<dbReference type="PANTHER" id="PTHR30446:SF0">
    <property type="entry name" value="RECOMBINATION PROTEIN RECR"/>
    <property type="match status" value="1"/>
</dbReference>
<dbReference type="Pfam" id="PF21175">
    <property type="entry name" value="RecR_C"/>
    <property type="match status" value="1"/>
</dbReference>
<dbReference type="Pfam" id="PF21176">
    <property type="entry name" value="RecR_HhH"/>
    <property type="match status" value="1"/>
</dbReference>
<dbReference type="Pfam" id="PF02132">
    <property type="entry name" value="RecR_ZnF"/>
    <property type="match status" value="1"/>
</dbReference>
<dbReference type="Pfam" id="PF13662">
    <property type="entry name" value="Toprim_4"/>
    <property type="match status" value="1"/>
</dbReference>
<dbReference type="SMART" id="SM00278">
    <property type="entry name" value="HhH1"/>
    <property type="match status" value="1"/>
</dbReference>
<dbReference type="SMART" id="SM00493">
    <property type="entry name" value="TOPRIM"/>
    <property type="match status" value="1"/>
</dbReference>
<dbReference type="SUPFAM" id="SSF111304">
    <property type="entry name" value="Recombination protein RecR"/>
    <property type="match status" value="1"/>
</dbReference>
<dbReference type="PROSITE" id="PS01300">
    <property type="entry name" value="RECR"/>
    <property type="match status" value="1"/>
</dbReference>
<dbReference type="PROSITE" id="PS50880">
    <property type="entry name" value="TOPRIM"/>
    <property type="match status" value="1"/>
</dbReference>
<feature type="chain" id="PRO_0000190392" description="Recombination protein RecR">
    <location>
        <begin position="1"/>
        <end position="198"/>
    </location>
</feature>
<feature type="domain" description="Toprim" evidence="1">
    <location>
        <begin position="80"/>
        <end position="175"/>
    </location>
</feature>
<feature type="zinc finger region" description="C4-type" evidence="1">
    <location>
        <begin position="57"/>
        <end position="72"/>
    </location>
</feature>
<evidence type="ECO:0000255" key="1">
    <source>
        <dbReference type="HAMAP-Rule" id="MF_00017"/>
    </source>
</evidence>
<gene>
    <name evidence="1" type="primary">recR</name>
    <name type="ordered locus">SERP0116</name>
</gene>